<feature type="chain" id="PRO_1000124000" description="Pyrrolidone-carboxylate peptidase">
    <location>
        <begin position="1"/>
        <end position="204"/>
    </location>
</feature>
<feature type="active site" evidence="1">
    <location>
        <position position="80"/>
    </location>
</feature>
<feature type="active site" evidence="1">
    <location>
        <position position="142"/>
    </location>
</feature>
<feature type="active site" evidence="1">
    <location>
        <position position="165"/>
    </location>
</feature>
<evidence type="ECO:0000255" key="1">
    <source>
        <dbReference type="HAMAP-Rule" id="MF_00417"/>
    </source>
</evidence>
<sequence length="204" mass="22962">MTKILLTGFEPFLDYKLNPTMQIVENLDGEKIENYHIIGRILSVDFQQSAEQLKRHIEEIEPQIIISLGLAGGRFKITPERIAINIKDGEPDNNGYSPVDESIQEEGADAYLTNLPIRHMINRLQEEGYPAEISNTAGTYLCNNIMYEGLVYAQQHEGVRAGFIHIPASFELAIQHGKIPGWHIRDLIAAVKLCIEETVRAGNH</sequence>
<name>PCP_LYSSC</name>
<comment type="function">
    <text evidence="1">Removes 5-oxoproline from various penultimate amino acid residues except L-proline.</text>
</comment>
<comment type="catalytic activity">
    <reaction evidence="1">
        <text>Release of an N-terminal pyroglutamyl group from a polypeptide, the second amino acid generally not being Pro.</text>
        <dbReference type="EC" id="3.4.19.3"/>
    </reaction>
</comment>
<comment type="subunit">
    <text evidence="1">Homotetramer.</text>
</comment>
<comment type="subcellular location">
    <subcellularLocation>
        <location evidence="1">Cytoplasm</location>
    </subcellularLocation>
</comment>
<comment type="similarity">
    <text evidence="1">Belongs to the peptidase C15 family.</text>
</comment>
<protein>
    <recommendedName>
        <fullName evidence="1">Pyrrolidone-carboxylate peptidase</fullName>
        <ecNumber evidence="1">3.4.19.3</ecNumber>
    </recommendedName>
    <alternativeName>
        <fullName evidence="1">5-oxoprolyl-peptidase</fullName>
    </alternativeName>
    <alternativeName>
        <fullName evidence="1">Pyroglutamyl-peptidase I</fullName>
        <shortName evidence="1">PGP-I</shortName>
        <shortName evidence="1">Pyrase</shortName>
    </alternativeName>
</protein>
<accession>B1HUY7</accession>
<organism>
    <name type="scientific">Lysinibacillus sphaericus (strain C3-41)</name>
    <dbReference type="NCBI Taxonomy" id="444177"/>
    <lineage>
        <taxon>Bacteria</taxon>
        <taxon>Bacillati</taxon>
        <taxon>Bacillota</taxon>
        <taxon>Bacilli</taxon>
        <taxon>Bacillales</taxon>
        <taxon>Bacillaceae</taxon>
        <taxon>Lysinibacillus</taxon>
    </lineage>
</organism>
<gene>
    <name evidence="1" type="primary">pcp</name>
    <name type="ordered locus">Bsph_2127</name>
</gene>
<dbReference type="EC" id="3.4.19.3" evidence="1"/>
<dbReference type="EMBL" id="CP000817">
    <property type="protein sequence ID" value="ACA39698.1"/>
    <property type="molecule type" value="Genomic_DNA"/>
</dbReference>
<dbReference type="RefSeq" id="WP_012293787.1">
    <property type="nucleotide sequence ID" value="NC_010382.1"/>
</dbReference>
<dbReference type="SMR" id="B1HUY7"/>
<dbReference type="MEROPS" id="C15.001"/>
<dbReference type="EnsemblBacteria" id="ACA39698">
    <property type="protein sequence ID" value="ACA39698"/>
    <property type="gene ID" value="Bsph_2127"/>
</dbReference>
<dbReference type="KEGG" id="lsp:Bsph_2127"/>
<dbReference type="HOGENOM" id="CLU_043960_4_0_9"/>
<dbReference type="Proteomes" id="UP000002164">
    <property type="component" value="Chromosome"/>
</dbReference>
<dbReference type="GO" id="GO:0005829">
    <property type="term" value="C:cytosol"/>
    <property type="evidence" value="ECO:0007669"/>
    <property type="project" value="InterPro"/>
</dbReference>
<dbReference type="GO" id="GO:0016920">
    <property type="term" value="F:pyroglutamyl-peptidase activity"/>
    <property type="evidence" value="ECO:0007669"/>
    <property type="project" value="UniProtKB-UniRule"/>
</dbReference>
<dbReference type="GO" id="GO:0006508">
    <property type="term" value="P:proteolysis"/>
    <property type="evidence" value="ECO:0007669"/>
    <property type="project" value="UniProtKB-KW"/>
</dbReference>
<dbReference type="CDD" id="cd00501">
    <property type="entry name" value="Peptidase_C15"/>
    <property type="match status" value="1"/>
</dbReference>
<dbReference type="Gene3D" id="3.40.630.20">
    <property type="entry name" value="Peptidase C15, pyroglutamyl peptidase I-like"/>
    <property type="match status" value="1"/>
</dbReference>
<dbReference type="HAMAP" id="MF_00417">
    <property type="entry name" value="Pyrrolid_peptidase"/>
    <property type="match status" value="1"/>
</dbReference>
<dbReference type="InterPro" id="IPR000816">
    <property type="entry name" value="Peptidase_C15"/>
</dbReference>
<dbReference type="InterPro" id="IPR016125">
    <property type="entry name" value="Peptidase_C15-like"/>
</dbReference>
<dbReference type="InterPro" id="IPR036440">
    <property type="entry name" value="Peptidase_C15-like_sf"/>
</dbReference>
<dbReference type="InterPro" id="IPR029762">
    <property type="entry name" value="PGP-I_bact-type"/>
</dbReference>
<dbReference type="InterPro" id="IPR033693">
    <property type="entry name" value="PGPEP1_Glu_AS"/>
</dbReference>
<dbReference type="NCBIfam" id="NF009676">
    <property type="entry name" value="PRK13197.1"/>
    <property type="match status" value="1"/>
</dbReference>
<dbReference type="NCBIfam" id="TIGR00504">
    <property type="entry name" value="pyro_pdase"/>
    <property type="match status" value="1"/>
</dbReference>
<dbReference type="PANTHER" id="PTHR23402">
    <property type="entry name" value="PROTEASE FAMILY C15 PYROGLUTAMYL-PEPTIDASE I-RELATED"/>
    <property type="match status" value="1"/>
</dbReference>
<dbReference type="PANTHER" id="PTHR23402:SF1">
    <property type="entry name" value="PYROGLUTAMYL-PEPTIDASE I"/>
    <property type="match status" value="1"/>
</dbReference>
<dbReference type="Pfam" id="PF01470">
    <property type="entry name" value="Peptidase_C15"/>
    <property type="match status" value="1"/>
</dbReference>
<dbReference type="PIRSF" id="PIRSF015592">
    <property type="entry name" value="Prld-crbxl_pptds"/>
    <property type="match status" value="1"/>
</dbReference>
<dbReference type="PRINTS" id="PR00706">
    <property type="entry name" value="PYROGLUPTASE"/>
</dbReference>
<dbReference type="SUPFAM" id="SSF53182">
    <property type="entry name" value="Pyrrolidone carboxyl peptidase (pyroglutamate aminopeptidase)"/>
    <property type="match status" value="1"/>
</dbReference>
<dbReference type="PROSITE" id="PS01333">
    <property type="entry name" value="PYRASE_GLU"/>
    <property type="match status" value="1"/>
</dbReference>
<proteinExistence type="inferred from homology"/>
<keyword id="KW-0963">Cytoplasm</keyword>
<keyword id="KW-0378">Hydrolase</keyword>
<keyword id="KW-0645">Protease</keyword>
<keyword id="KW-0788">Thiol protease</keyword>
<reference key="1">
    <citation type="journal article" date="2008" name="J. Bacteriol.">
        <title>Complete genome sequence of the mosquitocidal bacterium Bacillus sphaericus C3-41 and comparison with those of closely related Bacillus species.</title>
        <authorList>
            <person name="Hu X."/>
            <person name="Fan W."/>
            <person name="Han B."/>
            <person name="Liu H."/>
            <person name="Zheng D."/>
            <person name="Li Q."/>
            <person name="Dong W."/>
            <person name="Yan J."/>
            <person name="Gao M."/>
            <person name="Berry C."/>
            <person name="Yuan Z."/>
        </authorList>
    </citation>
    <scope>NUCLEOTIDE SEQUENCE [LARGE SCALE GENOMIC DNA]</scope>
    <source>
        <strain>C3-41</strain>
    </source>
</reference>